<reference key="1">
    <citation type="journal article" date="1997" name="Mol. Microbiol.">
        <title>The role of ribosomal RNAs in macrolide resistance.</title>
        <authorList>
            <person name="Sander P."/>
            <person name="Prammananan T."/>
            <person name="Meier A."/>
            <person name="Frischkorn K."/>
            <person name="Boettger E.C."/>
        </authorList>
    </citation>
    <scope>NUCLEOTIDE SEQUENCE [GENOMIC DNA]</scope>
    <source>
        <strain>BCG</strain>
    </source>
</reference>
<reference key="2">
    <citation type="journal article" date="2003" name="Proc. Natl. Acad. Sci. U.S.A.">
        <title>The complete genome sequence of Mycobacterium bovis.</title>
        <authorList>
            <person name="Garnier T."/>
            <person name="Eiglmeier K."/>
            <person name="Camus J.-C."/>
            <person name="Medina N."/>
            <person name="Mansoor H."/>
            <person name="Pryor M."/>
            <person name="Duthoy S."/>
            <person name="Grondin S."/>
            <person name="Lacroix C."/>
            <person name="Monsempe C."/>
            <person name="Simon S."/>
            <person name="Harris B."/>
            <person name="Atkin R."/>
            <person name="Doggett J."/>
            <person name="Mayes R."/>
            <person name="Keating L."/>
            <person name="Wheeler P.R."/>
            <person name="Parkhill J."/>
            <person name="Barrell B.G."/>
            <person name="Cole S.T."/>
            <person name="Gordon S.V."/>
            <person name="Hewinson R.G."/>
        </authorList>
    </citation>
    <scope>NUCLEOTIDE SEQUENCE [LARGE SCALE GENOMIC DNA]</scope>
    <source>
        <strain>ATCC BAA-935 / AF2122/97</strain>
    </source>
</reference>
<reference key="3">
    <citation type="journal article" date="2017" name="Genome Announc.">
        <title>Updated reference genome sequence and annotation of Mycobacterium bovis AF2122/97.</title>
        <authorList>
            <person name="Malone K.M."/>
            <person name="Farrell D."/>
            <person name="Stuber T.P."/>
            <person name="Schubert O.T."/>
            <person name="Aebersold R."/>
            <person name="Robbe-Austerman S."/>
            <person name="Gordon S.V."/>
        </authorList>
    </citation>
    <scope>NUCLEOTIDE SEQUENCE [LARGE SCALE GENOMIC DNA]</scope>
    <scope>GENOME REANNOTATION</scope>
    <source>
        <strain>ATCC BAA-935 / AF2122/97</strain>
    </source>
</reference>
<gene>
    <name type="primary">rpmC</name>
    <name type="ordered locus">BQ2027_MB0729</name>
</gene>
<name>RL29_MYCBO</name>
<feature type="chain" id="PRO_0000130417" description="Large ribosomal subunit protein uL29">
    <location>
        <begin position="1"/>
        <end position="77"/>
    </location>
</feature>
<feature type="sequence conflict" description="In Ref. 1; CAA73680." evidence="1" ref="1">
    <original>LRERELGLATGPDGKES</original>
    <variation>SARTRTGSGGDWARW</variation>
    <location>
        <begin position="61"/>
        <end position="77"/>
    </location>
</feature>
<accession>O06050</accession>
<accession>A0A1R3XW64</accession>
<accession>X2BFW6</accession>
<evidence type="ECO:0000305" key="1"/>
<proteinExistence type="inferred from homology"/>
<protein>
    <recommendedName>
        <fullName evidence="1">Large ribosomal subunit protein uL29</fullName>
    </recommendedName>
    <alternativeName>
        <fullName>50S ribosomal protein L29</fullName>
    </alternativeName>
</protein>
<sequence length="77" mass="8859">MAVGVSPGELRELTDEELAERLRESKEELFNLRFQMATGQLNNNRRLRTVRQEIARIYTVLRERELGLATGPDGKES</sequence>
<keyword id="KW-1185">Reference proteome</keyword>
<keyword id="KW-0687">Ribonucleoprotein</keyword>
<keyword id="KW-0689">Ribosomal protein</keyword>
<dbReference type="EMBL" id="Y13228">
    <property type="protein sequence ID" value="CAA73680.1"/>
    <property type="molecule type" value="Genomic_DNA"/>
</dbReference>
<dbReference type="EMBL" id="LT708304">
    <property type="protein sequence ID" value="SIT99328.1"/>
    <property type="molecule type" value="Genomic_DNA"/>
</dbReference>
<dbReference type="RefSeq" id="NP_854387.1">
    <property type="nucleotide sequence ID" value="NC_002945.3"/>
</dbReference>
<dbReference type="RefSeq" id="WP_003403594.1">
    <property type="nucleotide sequence ID" value="NC_002945.4"/>
</dbReference>
<dbReference type="SMR" id="O06050"/>
<dbReference type="GeneID" id="45424674"/>
<dbReference type="KEGG" id="mbo:BQ2027_MB0729"/>
<dbReference type="PATRIC" id="fig|233413.5.peg.795"/>
<dbReference type="Proteomes" id="UP000001419">
    <property type="component" value="Chromosome"/>
</dbReference>
<dbReference type="GO" id="GO:0022625">
    <property type="term" value="C:cytosolic large ribosomal subunit"/>
    <property type="evidence" value="ECO:0007669"/>
    <property type="project" value="TreeGrafter"/>
</dbReference>
<dbReference type="GO" id="GO:0003735">
    <property type="term" value="F:structural constituent of ribosome"/>
    <property type="evidence" value="ECO:0007669"/>
    <property type="project" value="InterPro"/>
</dbReference>
<dbReference type="GO" id="GO:0006412">
    <property type="term" value="P:translation"/>
    <property type="evidence" value="ECO:0007669"/>
    <property type="project" value="UniProtKB-UniRule"/>
</dbReference>
<dbReference type="CDD" id="cd00427">
    <property type="entry name" value="Ribosomal_L29_HIP"/>
    <property type="match status" value="1"/>
</dbReference>
<dbReference type="FunFam" id="1.10.287.310:FF:000001">
    <property type="entry name" value="50S ribosomal protein L29"/>
    <property type="match status" value="1"/>
</dbReference>
<dbReference type="Gene3D" id="1.10.287.310">
    <property type="match status" value="1"/>
</dbReference>
<dbReference type="HAMAP" id="MF_00374">
    <property type="entry name" value="Ribosomal_uL29"/>
    <property type="match status" value="1"/>
</dbReference>
<dbReference type="InterPro" id="IPR050063">
    <property type="entry name" value="Ribosomal_protein_uL29"/>
</dbReference>
<dbReference type="InterPro" id="IPR001854">
    <property type="entry name" value="Ribosomal_uL29"/>
</dbReference>
<dbReference type="InterPro" id="IPR018254">
    <property type="entry name" value="Ribosomal_uL29_CS"/>
</dbReference>
<dbReference type="InterPro" id="IPR036049">
    <property type="entry name" value="Ribosomal_uL29_sf"/>
</dbReference>
<dbReference type="NCBIfam" id="TIGR00012">
    <property type="entry name" value="L29"/>
    <property type="match status" value="1"/>
</dbReference>
<dbReference type="PANTHER" id="PTHR10916">
    <property type="entry name" value="60S RIBOSOMAL PROTEIN L35/50S RIBOSOMAL PROTEIN L29"/>
    <property type="match status" value="1"/>
</dbReference>
<dbReference type="PANTHER" id="PTHR10916:SF0">
    <property type="entry name" value="LARGE RIBOSOMAL SUBUNIT PROTEIN UL29C"/>
    <property type="match status" value="1"/>
</dbReference>
<dbReference type="Pfam" id="PF00831">
    <property type="entry name" value="Ribosomal_L29"/>
    <property type="match status" value="1"/>
</dbReference>
<dbReference type="SUPFAM" id="SSF46561">
    <property type="entry name" value="Ribosomal protein L29 (L29p)"/>
    <property type="match status" value="1"/>
</dbReference>
<dbReference type="PROSITE" id="PS00579">
    <property type="entry name" value="RIBOSOMAL_L29"/>
    <property type="match status" value="1"/>
</dbReference>
<organism>
    <name type="scientific">Mycobacterium bovis (strain ATCC BAA-935 / AF2122/97)</name>
    <dbReference type="NCBI Taxonomy" id="233413"/>
    <lineage>
        <taxon>Bacteria</taxon>
        <taxon>Bacillati</taxon>
        <taxon>Actinomycetota</taxon>
        <taxon>Actinomycetes</taxon>
        <taxon>Mycobacteriales</taxon>
        <taxon>Mycobacteriaceae</taxon>
        <taxon>Mycobacterium</taxon>
        <taxon>Mycobacterium tuberculosis complex</taxon>
    </lineage>
</organism>
<comment type="similarity">
    <text evidence="1">Belongs to the universal ribosomal protein uL29 family.</text>
</comment>